<gene>
    <name evidence="1" type="primary">dnaA</name>
    <name type="ordered locus">ECA4441</name>
</gene>
<comment type="function">
    <text evidence="1">Plays an essential role in the initiation and regulation of chromosomal replication. ATP-DnaA binds to the origin of replication (oriC) to initiate formation of the DNA replication initiation complex once per cell cycle. Binds the DnaA box (a 9 base pair repeat at the origin) and separates the double-stranded (ds)DNA. Forms a right-handed helical filament on oriC DNA; dsDNA binds to the exterior of the filament while single-stranded (ss)DNA is stabiized in the filament's interior. The ATP-DnaA-oriC complex binds and stabilizes one strand of the AT-rich DNA unwinding element (DUE), permitting loading of DNA polymerase. After initiation quickly degrades to an ADP-DnaA complex that is not apt for DNA replication. Binds acidic phospholipids.</text>
</comment>
<comment type="subunit">
    <text evidence="1">Oligomerizes as a right-handed, spiral filament on DNA at oriC.</text>
</comment>
<comment type="subcellular location">
    <subcellularLocation>
        <location evidence="1">Cytoplasm</location>
    </subcellularLocation>
</comment>
<comment type="domain">
    <text evidence="1">Domain I is involved in oligomerization and binding regulators, domain II is flexibile and of varying length in different bacteria, domain III forms the AAA+ region, while domain IV binds dsDNA.</text>
</comment>
<comment type="similarity">
    <text evidence="1">Belongs to the DnaA family.</text>
</comment>
<protein>
    <recommendedName>
        <fullName evidence="1">Chromosomal replication initiator protein DnaA</fullName>
    </recommendedName>
</protein>
<reference key="1">
    <citation type="journal article" date="2004" name="Proc. Natl. Acad. Sci. U.S.A.">
        <title>Genome sequence of the enterobacterial phytopathogen Erwinia carotovora subsp. atroseptica and characterization of virulence factors.</title>
        <authorList>
            <person name="Bell K.S."/>
            <person name="Sebaihia M."/>
            <person name="Pritchard L."/>
            <person name="Holden M.T.G."/>
            <person name="Hyman L.J."/>
            <person name="Holeva M.C."/>
            <person name="Thomson N.R."/>
            <person name="Bentley S.D."/>
            <person name="Churcher L.J.C."/>
            <person name="Mungall K."/>
            <person name="Atkin R."/>
            <person name="Bason N."/>
            <person name="Brooks K."/>
            <person name="Chillingworth T."/>
            <person name="Clark K."/>
            <person name="Doggett J."/>
            <person name="Fraser A."/>
            <person name="Hance Z."/>
            <person name="Hauser H."/>
            <person name="Jagels K."/>
            <person name="Moule S."/>
            <person name="Norbertczak H."/>
            <person name="Ormond D."/>
            <person name="Price C."/>
            <person name="Quail M.A."/>
            <person name="Sanders M."/>
            <person name="Walker D."/>
            <person name="Whitehead S."/>
            <person name="Salmond G.P.C."/>
            <person name="Birch P.R.J."/>
            <person name="Parkhill J."/>
            <person name="Toth I.K."/>
        </authorList>
    </citation>
    <scope>NUCLEOTIDE SEQUENCE [LARGE SCALE GENOMIC DNA]</scope>
    <source>
        <strain>SCRI 1043 / ATCC BAA-672</strain>
    </source>
</reference>
<accession>Q6CYR4</accession>
<dbReference type="EMBL" id="BX950851">
    <property type="protein sequence ID" value="CAG77337.1"/>
    <property type="molecule type" value="Genomic_DNA"/>
</dbReference>
<dbReference type="RefSeq" id="WP_011095900.1">
    <property type="nucleotide sequence ID" value="NC_004547.2"/>
</dbReference>
<dbReference type="SMR" id="Q6CYR4"/>
<dbReference type="STRING" id="218491.ECA4441"/>
<dbReference type="GeneID" id="57211134"/>
<dbReference type="KEGG" id="eca:ECA4441"/>
<dbReference type="PATRIC" id="fig|218491.5.peg.4529"/>
<dbReference type="eggNOG" id="COG0593">
    <property type="taxonomic scope" value="Bacteria"/>
</dbReference>
<dbReference type="HOGENOM" id="CLU_026910_0_1_6"/>
<dbReference type="OrthoDB" id="9807019at2"/>
<dbReference type="Proteomes" id="UP000007966">
    <property type="component" value="Chromosome"/>
</dbReference>
<dbReference type="GO" id="GO:0005737">
    <property type="term" value="C:cytoplasm"/>
    <property type="evidence" value="ECO:0007669"/>
    <property type="project" value="UniProtKB-SubCell"/>
</dbReference>
<dbReference type="GO" id="GO:0005886">
    <property type="term" value="C:plasma membrane"/>
    <property type="evidence" value="ECO:0007669"/>
    <property type="project" value="TreeGrafter"/>
</dbReference>
<dbReference type="GO" id="GO:0005524">
    <property type="term" value="F:ATP binding"/>
    <property type="evidence" value="ECO:0007669"/>
    <property type="project" value="UniProtKB-UniRule"/>
</dbReference>
<dbReference type="GO" id="GO:0016887">
    <property type="term" value="F:ATP hydrolysis activity"/>
    <property type="evidence" value="ECO:0007669"/>
    <property type="project" value="InterPro"/>
</dbReference>
<dbReference type="GO" id="GO:0003688">
    <property type="term" value="F:DNA replication origin binding"/>
    <property type="evidence" value="ECO:0007669"/>
    <property type="project" value="UniProtKB-UniRule"/>
</dbReference>
<dbReference type="GO" id="GO:0008289">
    <property type="term" value="F:lipid binding"/>
    <property type="evidence" value="ECO:0007669"/>
    <property type="project" value="UniProtKB-KW"/>
</dbReference>
<dbReference type="GO" id="GO:0006270">
    <property type="term" value="P:DNA replication initiation"/>
    <property type="evidence" value="ECO:0007669"/>
    <property type="project" value="UniProtKB-UniRule"/>
</dbReference>
<dbReference type="GO" id="GO:0006275">
    <property type="term" value="P:regulation of DNA replication"/>
    <property type="evidence" value="ECO:0007669"/>
    <property type="project" value="UniProtKB-UniRule"/>
</dbReference>
<dbReference type="CDD" id="cd00009">
    <property type="entry name" value="AAA"/>
    <property type="match status" value="1"/>
</dbReference>
<dbReference type="CDD" id="cd06571">
    <property type="entry name" value="Bac_DnaA_C"/>
    <property type="match status" value="1"/>
</dbReference>
<dbReference type="FunFam" id="1.10.1750.10:FF:000001">
    <property type="entry name" value="Chromosomal replication initiator protein DnaA"/>
    <property type="match status" value="1"/>
</dbReference>
<dbReference type="FunFam" id="1.10.8.60:FF:000003">
    <property type="entry name" value="Chromosomal replication initiator protein DnaA"/>
    <property type="match status" value="1"/>
</dbReference>
<dbReference type="FunFam" id="3.30.300.180:FF:000001">
    <property type="entry name" value="Chromosomal replication initiator protein DnaA"/>
    <property type="match status" value="1"/>
</dbReference>
<dbReference type="FunFam" id="3.40.50.300:FF:000103">
    <property type="entry name" value="Chromosomal replication initiator protein DnaA"/>
    <property type="match status" value="1"/>
</dbReference>
<dbReference type="Gene3D" id="1.10.1750.10">
    <property type="match status" value="1"/>
</dbReference>
<dbReference type="Gene3D" id="1.10.8.60">
    <property type="match status" value="1"/>
</dbReference>
<dbReference type="Gene3D" id="3.30.300.180">
    <property type="match status" value="1"/>
</dbReference>
<dbReference type="Gene3D" id="3.40.50.300">
    <property type="entry name" value="P-loop containing nucleotide triphosphate hydrolases"/>
    <property type="match status" value="1"/>
</dbReference>
<dbReference type="HAMAP" id="MF_00377">
    <property type="entry name" value="DnaA_bact"/>
    <property type="match status" value="1"/>
</dbReference>
<dbReference type="InterPro" id="IPR003593">
    <property type="entry name" value="AAA+_ATPase"/>
</dbReference>
<dbReference type="InterPro" id="IPR001957">
    <property type="entry name" value="Chromosome_initiator_DnaA"/>
</dbReference>
<dbReference type="InterPro" id="IPR020591">
    <property type="entry name" value="Chromosome_initiator_DnaA-like"/>
</dbReference>
<dbReference type="InterPro" id="IPR018312">
    <property type="entry name" value="Chromosome_initiator_DnaA_CS"/>
</dbReference>
<dbReference type="InterPro" id="IPR013159">
    <property type="entry name" value="DnaA_C"/>
</dbReference>
<dbReference type="InterPro" id="IPR013317">
    <property type="entry name" value="DnaA_dom"/>
</dbReference>
<dbReference type="InterPro" id="IPR024633">
    <property type="entry name" value="DnaA_N_dom"/>
</dbReference>
<dbReference type="InterPro" id="IPR038454">
    <property type="entry name" value="DnaA_N_sf"/>
</dbReference>
<dbReference type="InterPro" id="IPR027417">
    <property type="entry name" value="P-loop_NTPase"/>
</dbReference>
<dbReference type="InterPro" id="IPR010921">
    <property type="entry name" value="Trp_repressor/repl_initiator"/>
</dbReference>
<dbReference type="NCBIfam" id="TIGR00362">
    <property type="entry name" value="DnaA"/>
    <property type="match status" value="1"/>
</dbReference>
<dbReference type="PANTHER" id="PTHR30050">
    <property type="entry name" value="CHROMOSOMAL REPLICATION INITIATOR PROTEIN DNAA"/>
    <property type="match status" value="1"/>
</dbReference>
<dbReference type="PANTHER" id="PTHR30050:SF2">
    <property type="entry name" value="CHROMOSOMAL REPLICATION INITIATOR PROTEIN DNAA"/>
    <property type="match status" value="1"/>
</dbReference>
<dbReference type="Pfam" id="PF00308">
    <property type="entry name" value="Bac_DnaA"/>
    <property type="match status" value="1"/>
</dbReference>
<dbReference type="Pfam" id="PF08299">
    <property type="entry name" value="Bac_DnaA_C"/>
    <property type="match status" value="1"/>
</dbReference>
<dbReference type="Pfam" id="PF11638">
    <property type="entry name" value="DnaA_N"/>
    <property type="match status" value="1"/>
</dbReference>
<dbReference type="PRINTS" id="PR00051">
    <property type="entry name" value="DNAA"/>
</dbReference>
<dbReference type="SMART" id="SM00382">
    <property type="entry name" value="AAA"/>
    <property type="match status" value="1"/>
</dbReference>
<dbReference type="SMART" id="SM00760">
    <property type="entry name" value="Bac_DnaA_C"/>
    <property type="match status" value="1"/>
</dbReference>
<dbReference type="SUPFAM" id="SSF52540">
    <property type="entry name" value="P-loop containing nucleoside triphosphate hydrolases"/>
    <property type="match status" value="1"/>
</dbReference>
<dbReference type="SUPFAM" id="SSF48295">
    <property type="entry name" value="TrpR-like"/>
    <property type="match status" value="1"/>
</dbReference>
<dbReference type="PROSITE" id="PS01008">
    <property type="entry name" value="DNAA"/>
    <property type="match status" value="1"/>
</dbReference>
<organism>
    <name type="scientific">Pectobacterium atrosepticum (strain SCRI 1043 / ATCC BAA-672)</name>
    <name type="common">Erwinia carotovora subsp. atroseptica</name>
    <dbReference type="NCBI Taxonomy" id="218491"/>
    <lineage>
        <taxon>Bacteria</taxon>
        <taxon>Pseudomonadati</taxon>
        <taxon>Pseudomonadota</taxon>
        <taxon>Gammaproteobacteria</taxon>
        <taxon>Enterobacterales</taxon>
        <taxon>Pectobacteriaceae</taxon>
        <taxon>Pectobacterium</taxon>
    </lineage>
</organism>
<name>DNAA_PECAS</name>
<keyword id="KW-0067">ATP-binding</keyword>
<keyword id="KW-0963">Cytoplasm</keyword>
<keyword id="KW-0235">DNA replication</keyword>
<keyword id="KW-0238">DNA-binding</keyword>
<keyword id="KW-0446">Lipid-binding</keyword>
<keyword id="KW-0547">Nucleotide-binding</keyword>
<keyword id="KW-1185">Reference proteome</keyword>
<feature type="chain" id="PRO_0000114179" description="Chromosomal replication initiator protein DnaA">
    <location>
        <begin position="1"/>
        <end position="465"/>
    </location>
</feature>
<feature type="region of interest" description="Domain I, interacts with DnaA modulators" evidence="1">
    <location>
        <begin position="1"/>
        <end position="84"/>
    </location>
</feature>
<feature type="region of interest" description="Domain II" evidence="1">
    <location>
        <begin position="84"/>
        <end position="128"/>
    </location>
</feature>
<feature type="region of interest" description="Domain III, AAA+ region" evidence="1">
    <location>
        <begin position="129"/>
        <end position="345"/>
    </location>
</feature>
<feature type="region of interest" description="Domain IV, binds dsDNA" evidence="1">
    <location>
        <begin position="346"/>
        <end position="465"/>
    </location>
</feature>
<feature type="binding site" evidence="1">
    <location>
        <position position="173"/>
    </location>
    <ligand>
        <name>ATP</name>
        <dbReference type="ChEBI" id="CHEBI:30616"/>
    </ligand>
</feature>
<feature type="binding site" evidence="1">
    <location>
        <position position="175"/>
    </location>
    <ligand>
        <name>ATP</name>
        <dbReference type="ChEBI" id="CHEBI:30616"/>
    </ligand>
</feature>
<feature type="binding site" evidence="1">
    <location>
        <position position="176"/>
    </location>
    <ligand>
        <name>ATP</name>
        <dbReference type="ChEBI" id="CHEBI:30616"/>
    </ligand>
</feature>
<feature type="binding site" evidence="1">
    <location>
        <position position="177"/>
    </location>
    <ligand>
        <name>ATP</name>
        <dbReference type="ChEBI" id="CHEBI:30616"/>
    </ligand>
</feature>
<sequence>MSLSLWQQCLARLQDELPATEFSMWIRPLQAELSDNTLALYAPNRFVLDWVRDKYLNNINVLLNDFCGMDAPLLRFEVGSKPLVQTISQPAQSHHNPVSVARQQPVRMAPVRPSWDNSPVQAEHTYRSNVNPKHTFDNFVEGKSNQLARAAARQVADNPGGAYNPLFLYGGTGLGKTHLLHAVGNGIIARKPNAKVVYMHSERFVQDMVKALQNNAIEEFKRYYRSVDALLIDDIQFFANKERSQEEFFHTFNALLEGNQQIILTSDRYPKEINGVEDRLKSRFGWGLTVAIEPPELETRVAILMKKADENDIRLPGEVAFFIAKRLRSNVRELEGALNRVIANANFTGRSITIDFVREALRDLLALQEKLVTIDNIQKTVAEYYKIKIADLLSKRRSRSVARPRQMAMALAKELTNHSLPEIGDAFGGRDHTTVLHACRKIEQLREESHDIKEDFSNLIRTLSS</sequence>
<proteinExistence type="inferred from homology"/>
<evidence type="ECO:0000255" key="1">
    <source>
        <dbReference type="HAMAP-Rule" id="MF_00377"/>
    </source>
</evidence>